<dbReference type="EC" id="2.3.3.13" evidence="1"/>
<dbReference type="EMBL" id="FP565814">
    <property type="protein sequence ID" value="CBH25291.1"/>
    <property type="molecule type" value="Genomic_DNA"/>
</dbReference>
<dbReference type="RefSeq" id="WP_011404875.1">
    <property type="nucleotide sequence ID" value="NC_014032.1"/>
</dbReference>
<dbReference type="SMR" id="D5HB86"/>
<dbReference type="KEGG" id="srm:SRM_02370"/>
<dbReference type="PATRIC" id="fig|761659.10.peg.2580"/>
<dbReference type="HOGENOM" id="CLU_022158_0_1_10"/>
<dbReference type="UniPathway" id="UPA00048">
    <property type="reaction ID" value="UER00070"/>
</dbReference>
<dbReference type="Proteomes" id="UP000000933">
    <property type="component" value="Chromosome"/>
</dbReference>
<dbReference type="GO" id="GO:0005737">
    <property type="term" value="C:cytoplasm"/>
    <property type="evidence" value="ECO:0007669"/>
    <property type="project" value="UniProtKB-SubCell"/>
</dbReference>
<dbReference type="GO" id="GO:0003852">
    <property type="term" value="F:2-isopropylmalate synthase activity"/>
    <property type="evidence" value="ECO:0007669"/>
    <property type="project" value="UniProtKB-UniRule"/>
</dbReference>
<dbReference type="GO" id="GO:0003985">
    <property type="term" value="F:acetyl-CoA C-acetyltransferase activity"/>
    <property type="evidence" value="ECO:0007669"/>
    <property type="project" value="UniProtKB-UniRule"/>
</dbReference>
<dbReference type="GO" id="GO:0030145">
    <property type="term" value="F:manganese ion binding"/>
    <property type="evidence" value="ECO:0007669"/>
    <property type="project" value="UniProtKB-UniRule"/>
</dbReference>
<dbReference type="GO" id="GO:0009098">
    <property type="term" value="P:L-leucine biosynthetic process"/>
    <property type="evidence" value="ECO:0007669"/>
    <property type="project" value="UniProtKB-UniRule"/>
</dbReference>
<dbReference type="CDD" id="cd07940">
    <property type="entry name" value="DRE_TIM_IPMS"/>
    <property type="match status" value="1"/>
</dbReference>
<dbReference type="FunFam" id="1.10.238.260:FF:000001">
    <property type="entry name" value="2-isopropylmalate synthase"/>
    <property type="match status" value="1"/>
</dbReference>
<dbReference type="FunFam" id="3.20.20.70:FF:000010">
    <property type="entry name" value="2-isopropylmalate synthase"/>
    <property type="match status" value="1"/>
</dbReference>
<dbReference type="Gene3D" id="1.10.238.260">
    <property type="match status" value="1"/>
</dbReference>
<dbReference type="Gene3D" id="3.30.160.270">
    <property type="match status" value="1"/>
</dbReference>
<dbReference type="Gene3D" id="3.20.20.70">
    <property type="entry name" value="Aldolase class I"/>
    <property type="match status" value="1"/>
</dbReference>
<dbReference type="HAMAP" id="MF_01025">
    <property type="entry name" value="LeuA_type1"/>
    <property type="match status" value="1"/>
</dbReference>
<dbReference type="InterPro" id="IPR050073">
    <property type="entry name" value="2-IPM_HCS-like"/>
</dbReference>
<dbReference type="InterPro" id="IPR013709">
    <property type="entry name" value="2-isopropylmalate_synth_dimer"/>
</dbReference>
<dbReference type="InterPro" id="IPR002034">
    <property type="entry name" value="AIPM/Hcit_synth_CS"/>
</dbReference>
<dbReference type="InterPro" id="IPR013785">
    <property type="entry name" value="Aldolase_TIM"/>
</dbReference>
<dbReference type="InterPro" id="IPR054691">
    <property type="entry name" value="LeuA/HCS_post-cat"/>
</dbReference>
<dbReference type="InterPro" id="IPR036230">
    <property type="entry name" value="LeuA_allosteric_dom_sf"/>
</dbReference>
<dbReference type="InterPro" id="IPR005671">
    <property type="entry name" value="LeuA_bact_synth"/>
</dbReference>
<dbReference type="InterPro" id="IPR000891">
    <property type="entry name" value="PYR_CT"/>
</dbReference>
<dbReference type="NCBIfam" id="TIGR00973">
    <property type="entry name" value="leuA_bact"/>
    <property type="match status" value="1"/>
</dbReference>
<dbReference type="NCBIfam" id="NF002086">
    <property type="entry name" value="PRK00915.1-3"/>
    <property type="match status" value="1"/>
</dbReference>
<dbReference type="PANTHER" id="PTHR10277:SF9">
    <property type="entry name" value="2-ISOPROPYLMALATE SYNTHASE 1, CHLOROPLASTIC-RELATED"/>
    <property type="match status" value="1"/>
</dbReference>
<dbReference type="PANTHER" id="PTHR10277">
    <property type="entry name" value="HOMOCITRATE SYNTHASE-RELATED"/>
    <property type="match status" value="1"/>
</dbReference>
<dbReference type="Pfam" id="PF22617">
    <property type="entry name" value="HCS_D2"/>
    <property type="match status" value="1"/>
</dbReference>
<dbReference type="Pfam" id="PF00682">
    <property type="entry name" value="HMGL-like"/>
    <property type="match status" value="1"/>
</dbReference>
<dbReference type="Pfam" id="PF08502">
    <property type="entry name" value="LeuA_dimer"/>
    <property type="match status" value="1"/>
</dbReference>
<dbReference type="SMART" id="SM00917">
    <property type="entry name" value="LeuA_dimer"/>
    <property type="match status" value="1"/>
</dbReference>
<dbReference type="SUPFAM" id="SSF110921">
    <property type="entry name" value="2-isopropylmalate synthase LeuA, allosteric (dimerisation) domain"/>
    <property type="match status" value="1"/>
</dbReference>
<dbReference type="SUPFAM" id="SSF51569">
    <property type="entry name" value="Aldolase"/>
    <property type="match status" value="1"/>
</dbReference>
<dbReference type="PROSITE" id="PS00815">
    <property type="entry name" value="AIPM_HOMOCIT_SYNTH_1"/>
    <property type="match status" value="1"/>
</dbReference>
<dbReference type="PROSITE" id="PS00816">
    <property type="entry name" value="AIPM_HOMOCIT_SYNTH_2"/>
    <property type="match status" value="1"/>
</dbReference>
<dbReference type="PROSITE" id="PS50991">
    <property type="entry name" value="PYR_CT"/>
    <property type="match status" value="1"/>
</dbReference>
<name>LEU1_SALRM</name>
<reference key="1">
    <citation type="submission" date="2010-04" db="EMBL/GenBank/DDBJ databases">
        <title>Genome sequence of Salinibacter ruber M8.</title>
        <authorList>
            <consortium name="Genoscope"/>
        </authorList>
    </citation>
    <scope>NUCLEOTIDE SEQUENCE [LARGE SCALE GENOMIC DNA]</scope>
    <source>
        <strain>M8</strain>
    </source>
</reference>
<accession>D5HB86</accession>
<organism>
    <name type="scientific">Salinibacter ruber (strain M8)</name>
    <dbReference type="NCBI Taxonomy" id="761659"/>
    <lineage>
        <taxon>Bacteria</taxon>
        <taxon>Pseudomonadati</taxon>
        <taxon>Rhodothermota</taxon>
        <taxon>Rhodothermia</taxon>
        <taxon>Rhodothermales</taxon>
        <taxon>Salinibacteraceae</taxon>
        <taxon>Salinibacter</taxon>
    </lineage>
</organism>
<gene>
    <name evidence="1" type="primary">leuA</name>
    <name type="ordered locus">SRM_02370</name>
</gene>
<comment type="function">
    <text evidence="1">Catalyzes the condensation of the acetyl group of acetyl-CoA with 3-methyl-2-oxobutanoate (2-ketoisovalerate) to form 3-carboxy-3-hydroxy-4-methylpentanoate (2-isopropylmalate).</text>
</comment>
<comment type="catalytic activity">
    <reaction evidence="1">
        <text>3-methyl-2-oxobutanoate + acetyl-CoA + H2O = (2S)-2-isopropylmalate + CoA + H(+)</text>
        <dbReference type="Rhea" id="RHEA:21524"/>
        <dbReference type="ChEBI" id="CHEBI:1178"/>
        <dbReference type="ChEBI" id="CHEBI:11851"/>
        <dbReference type="ChEBI" id="CHEBI:15377"/>
        <dbReference type="ChEBI" id="CHEBI:15378"/>
        <dbReference type="ChEBI" id="CHEBI:57287"/>
        <dbReference type="ChEBI" id="CHEBI:57288"/>
        <dbReference type="EC" id="2.3.3.13"/>
    </reaction>
</comment>
<comment type="cofactor">
    <cofactor evidence="1">
        <name>Mn(2+)</name>
        <dbReference type="ChEBI" id="CHEBI:29035"/>
    </cofactor>
</comment>
<comment type="pathway">
    <text evidence="1">Amino-acid biosynthesis; L-leucine biosynthesis; L-leucine from 3-methyl-2-oxobutanoate: step 1/4.</text>
</comment>
<comment type="subunit">
    <text evidence="1">Homodimer.</text>
</comment>
<comment type="subcellular location">
    <subcellularLocation>
        <location evidence="1">Cytoplasm</location>
    </subcellularLocation>
</comment>
<comment type="similarity">
    <text evidence="1">Belongs to the alpha-IPM synthase/homocitrate synthase family. LeuA type 1 subfamily.</text>
</comment>
<protein>
    <recommendedName>
        <fullName evidence="1">2-isopropylmalate synthase</fullName>
        <ecNumber evidence="1">2.3.3.13</ecNumber>
    </recommendedName>
    <alternativeName>
        <fullName evidence="1">Alpha-IPM synthase</fullName>
    </alternativeName>
    <alternativeName>
        <fullName evidence="1">Alpha-isopropylmalate synthase</fullName>
    </alternativeName>
</protein>
<keyword id="KW-0028">Amino-acid biosynthesis</keyword>
<keyword id="KW-0100">Branched-chain amino acid biosynthesis</keyword>
<keyword id="KW-0963">Cytoplasm</keyword>
<keyword id="KW-0432">Leucine biosynthesis</keyword>
<keyword id="KW-0464">Manganese</keyword>
<keyword id="KW-0479">Metal-binding</keyword>
<keyword id="KW-0808">Transferase</keyword>
<sequence>MSDSITIFDTTLRDGEQAPGASMTVPEKVHIAHKLADLNVDVIEAGFPISSPAQTEAVTRIATEVDGPVTCALARTKEDDIDAAGEALADGTDTRLHTFIATSDVHIEAKFDKLGNTMAEKREAIIQRAVRAIEQALTYTDNVEFSAEDAGRTDPEFLCEVVQAAAEAGATTINIPDTTGYCAPSEYTDLLETVVDCLPDPDAVTLSTHCHDDLGLATANTLAGIRAGARQVECTINGIGERAGNAALEEIVMALTVRADAFDVTADVHTEHLTPTSQTVSAATGFPVQPNKAIVGSNAFSHEAGIHQHGVLEERTTYEIMSATDVGQDAEQIRLGRHSGRHGLFNRLEAMGYAVPEGHRDALYDRFLDLADRKKEVFEEDLEQMMNDFGGDAVAAATGLPDNGVALNGGTPAYRLDQFSVHLSSDDEAKVSVRLQRDDGSAREEQATGEGPVDALYRALDHAVDAPHTLVDYSIRSISEGADAQGEVEVTIRYGENQFAGTARNTDVIRASAEAYVDALNRLVAAQEHAESVEFVQNGIMHTYGE</sequence>
<evidence type="ECO:0000255" key="1">
    <source>
        <dbReference type="HAMAP-Rule" id="MF_01025"/>
    </source>
</evidence>
<feature type="chain" id="PRO_0000406898" description="2-isopropylmalate synthase">
    <location>
        <begin position="1"/>
        <end position="546"/>
    </location>
</feature>
<feature type="domain" description="Pyruvate carboxyltransferase" evidence="1">
    <location>
        <begin position="5"/>
        <end position="274"/>
    </location>
</feature>
<feature type="region of interest" description="Regulatory domain" evidence="1">
    <location>
        <begin position="415"/>
        <end position="546"/>
    </location>
</feature>
<feature type="binding site" evidence="1">
    <location>
        <position position="14"/>
    </location>
    <ligand>
        <name>Mn(2+)</name>
        <dbReference type="ChEBI" id="CHEBI:29035"/>
    </ligand>
</feature>
<feature type="binding site" evidence="1">
    <location>
        <position position="209"/>
    </location>
    <ligand>
        <name>Mn(2+)</name>
        <dbReference type="ChEBI" id="CHEBI:29035"/>
    </ligand>
</feature>
<feature type="binding site" evidence="1">
    <location>
        <position position="211"/>
    </location>
    <ligand>
        <name>Mn(2+)</name>
        <dbReference type="ChEBI" id="CHEBI:29035"/>
    </ligand>
</feature>
<feature type="binding site" evidence="1">
    <location>
        <position position="245"/>
    </location>
    <ligand>
        <name>Mn(2+)</name>
        <dbReference type="ChEBI" id="CHEBI:29035"/>
    </ligand>
</feature>
<proteinExistence type="inferred from homology"/>